<name>RSMG_RHIJ3</name>
<accession>Q1MA20</accession>
<sequence>MELNGLRVSRETQERLQHFAALFQKWAKAINLVAPSTLDDLWHRHIADSSQVFQIHPQPITWVDLGSGGGFPGVITAIFLAELQGGWVHLVESNHKKAAFLRTALRETNARGSVHSIRIEDAYTEVRECSAISARALTDLDGLIGYSSPWMLGKENCRGFFHKGRDYLREIDKARGRWEFDLLEHKSAVEQESVILEISNLRRLV</sequence>
<proteinExistence type="inferred from homology"/>
<feature type="chain" id="PRO_1000010191" description="Ribosomal RNA small subunit methyltransferase G">
    <location>
        <begin position="1"/>
        <end position="205"/>
    </location>
</feature>
<feature type="binding site" evidence="1">
    <location>
        <position position="66"/>
    </location>
    <ligand>
        <name>S-adenosyl-L-methionine</name>
        <dbReference type="ChEBI" id="CHEBI:59789"/>
    </ligand>
</feature>
<feature type="binding site" evidence="1">
    <location>
        <position position="71"/>
    </location>
    <ligand>
        <name>S-adenosyl-L-methionine</name>
        <dbReference type="ChEBI" id="CHEBI:59789"/>
    </ligand>
</feature>
<feature type="binding site" evidence="1">
    <location>
        <begin position="119"/>
        <end position="120"/>
    </location>
    <ligand>
        <name>S-adenosyl-L-methionine</name>
        <dbReference type="ChEBI" id="CHEBI:59789"/>
    </ligand>
</feature>
<feature type="binding site" evidence="1">
    <location>
        <position position="135"/>
    </location>
    <ligand>
        <name>S-adenosyl-L-methionine</name>
        <dbReference type="ChEBI" id="CHEBI:59789"/>
    </ligand>
</feature>
<reference key="1">
    <citation type="journal article" date="2006" name="Genome Biol.">
        <title>The genome of Rhizobium leguminosarum has recognizable core and accessory components.</title>
        <authorList>
            <person name="Young J.P.W."/>
            <person name="Crossman L.C."/>
            <person name="Johnston A.W.B."/>
            <person name="Thomson N.R."/>
            <person name="Ghazoui Z.F."/>
            <person name="Hull K.H."/>
            <person name="Wexler M."/>
            <person name="Curson A.R.J."/>
            <person name="Todd J.D."/>
            <person name="Poole P.S."/>
            <person name="Mauchline T.H."/>
            <person name="East A.K."/>
            <person name="Quail M.A."/>
            <person name="Churcher C."/>
            <person name="Arrowsmith C."/>
            <person name="Cherevach I."/>
            <person name="Chillingworth T."/>
            <person name="Clarke K."/>
            <person name="Cronin A."/>
            <person name="Davis P."/>
            <person name="Fraser A."/>
            <person name="Hance Z."/>
            <person name="Hauser H."/>
            <person name="Jagels K."/>
            <person name="Moule S."/>
            <person name="Mungall K."/>
            <person name="Norbertczak H."/>
            <person name="Rabbinowitsch E."/>
            <person name="Sanders M."/>
            <person name="Simmonds M."/>
            <person name="Whitehead S."/>
            <person name="Parkhill J."/>
        </authorList>
    </citation>
    <scope>NUCLEOTIDE SEQUENCE [LARGE SCALE GENOMIC DNA]</scope>
    <source>
        <strain>DSM 114642 / LMG 32736 / 3841</strain>
    </source>
</reference>
<gene>
    <name evidence="1" type="primary">rsmG</name>
    <name type="ordered locus">RL4737</name>
</gene>
<evidence type="ECO:0000255" key="1">
    <source>
        <dbReference type="HAMAP-Rule" id="MF_00074"/>
    </source>
</evidence>
<organism>
    <name type="scientific">Rhizobium johnstonii (strain DSM 114642 / LMG 32736 / 3841)</name>
    <name type="common">Rhizobium leguminosarum bv. viciae</name>
    <dbReference type="NCBI Taxonomy" id="216596"/>
    <lineage>
        <taxon>Bacteria</taxon>
        <taxon>Pseudomonadati</taxon>
        <taxon>Pseudomonadota</taxon>
        <taxon>Alphaproteobacteria</taxon>
        <taxon>Hyphomicrobiales</taxon>
        <taxon>Rhizobiaceae</taxon>
        <taxon>Rhizobium/Agrobacterium group</taxon>
        <taxon>Rhizobium</taxon>
        <taxon>Rhizobium johnstonii</taxon>
    </lineage>
</organism>
<protein>
    <recommendedName>
        <fullName evidence="1">Ribosomal RNA small subunit methyltransferase G</fullName>
        <ecNumber evidence="1">2.1.1.170</ecNumber>
    </recommendedName>
    <alternativeName>
        <fullName evidence="1">16S rRNA 7-methylguanosine methyltransferase</fullName>
        <shortName evidence="1">16S rRNA m7G methyltransferase</shortName>
    </alternativeName>
</protein>
<comment type="function">
    <text evidence="1">Specifically methylates the N7 position of guanine in position 527 of 16S rRNA.</text>
</comment>
<comment type="catalytic activity">
    <reaction evidence="1">
        <text>guanosine(527) in 16S rRNA + S-adenosyl-L-methionine = N(7)-methylguanosine(527) in 16S rRNA + S-adenosyl-L-homocysteine</text>
        <dbReference type="Rhea" id="RHEA:42732"/>
        <dbReference type="Rhea" id="RHEA-COMP:10209"/>
        <dbReference type="Rhea" id="RHEA-COMP:10210"/>
        <dbReference type="ChEBI" id="CHEBI:57856"/>
        <dbReference type="ChEBI" id="CHEBI:59789"/>
        <dbReference type="ChEBI" id="CHEBI:74269"/>
        <dbReference type="ChEBI" id="CHEBI:74480"/>
        <dbReference type="EC" id="2.1.1.170"/>
    </reaction>
</comment>
<comment type="subcellular location">
    <subcellularLocation>
        <location evidence="1">Cytoplasm</location>
    </subcellularLocation>
</comment>
<comment type="similarity">
    <text evidence="1">Belongs to the methyltransferase superfamily. RNA methyltransferase RsmG family.</text>
</comment>
<dbReference type="EC" id="2.1.1.170" evidence="1"/>
<dbReference type="EMBL" id="AM236080">
    <property type="protein sequence ID" value="CAK10220.1"/>
    <property type="molecule type" value="Genomic_DNA"/>
</dbReference>
<dbReference type="RefSeq" id="WP_011654066.1">
    <property type="nucleotide sequence ID" value="NC_008380.1"/>
</dbReference>
<dbReference type="SMR" id="Q1MA20"/>
<dbReference type="EnsemblBacteria" id="CAK10220">
    <property type="protein sequence ID" value="CAK10220"/>
    <property type="gene ID" value="RL4737"/>
</dbReference>
<dbReference type="KEGG" id="rle:RL4737"/>
<dbReference type="eggNOG" id="COG0357">
    <property type="taxonomic scope" value="Bacteria"/>
</dbReference>
<dbReference type="HOGENOM" id="CLU_065341_1_1_5"/>
<dbReference type="Proteomes" id="UP000006575">
    <property type="component" value="Chromosome"/>
</dbReference>
<dbReference type="GO" id="GO:0005829">
    <property type="term" value="C:cytosol"/>
    <property type="evidence" value="ECO:0007669"/>
    <property type="project" value="TreeGrafter"/>
</dbReference>
<dbReference type="GO" id="GO:0070043">
    <property type="term" value="F:rRNA (guanine-N7-)-methyltransferase activity"/>
    <property type="evidence" value="ECO:0007669"/>
    <property type="project" value="UniProtKB-UniRule"/>
</dbReference>
<dbReference type="Gene3D" id="3.40.50.150">
    <property type="entry name" value="Vaccinia Virus protein VP39"/>
    <property type="match status" value="1"/>
</dbReference>
<dbReference type="HAMAP" id="MF_00074">
    <property type="entry name" value="16SrRNA_methyltr_G"/>
    <property type="match status" value="1"/>
</dbReference>
<dbReference type="InterPro" id="IPR003682">
    <property type="entry name" value="rRNA_ssu_MeTfrase_G"/>
</dbReference>
<dbReference type="InterPro" id="IPR029063">
    <property type="entry name" value="SAM-dependent_MTases_sf"/>
</dbReference>
<dbReference type="NCBIfam" id="TIGR00138">
    <property type="entry name" value="rsmG_gidB"/>
    <property type="match status" value="1"/>
</dbReference>
<dbReference type="PANTHER" id="PTHR31760">
    <property type="entry name" value="S-ADENOSYL-L-METHIONINE-DEPENDENT METHYLTRANSFERASES SUPERFAMILY PROTEIN"/>
    <property type="match status" value="1"/>
</dbReference>
<dbReference type="PANTHER" id="PTHR31760:SF0">
    <property type="entry name" value="S-ADENOSYL-L-METHIONINE-DEPENDENT METHYLTRANSFERASES SUPERFAMILY PROTEIN"/>
    <property type="match status" value="1"/>
</dbReference>
<dbReference type="Pfam" id="PF02527">
    <property type="entry name" value="GidB"/>
    <property type="match status" value="1"/>
</dbReference>
<dbReference type="PIRSF" id="PIRSF003078">
    <property type="entry name" value="GidB"/>
    <property type="match status" value="1"/>
</dbReference>
<dbReference type="SUPFAM" id="SSF53335">
    <property type="entry name" value="S-adenosyl-L-methionine-dependent methyltransferases"/>
    <property type="match status" value="1"/>
</dbReference>
<keyword id="KW-0963">Cytoplasm</keyword>
<keyword id="KW-0489">Methyltransferase</keyword>
<keyword id="KW-0698">rRNA processing</keyword>
<keyword id="KW-0949">S-adenosyl-L-methionine</keyword>
<keyword id="KW-0808">Transferase</keyword>